<proteinExistence type="evidence at transcript level"/>
<keyword id="KW-0066">ATP synthesis</keyword>
<keyword id="KW-0067">ATP-binding</keyword>
<keyword id="KW-1003">Cell membrane</keyword>
<keyword id="KW-0139">CF(1)</keyword>
<keyword id="KW-0375">Hydrogen ion transport</keyword>
<keyword id="KW-0406">Ion transport</keyword>
<keyword id="KW-0472">Membrane</keyword>
<keyword id="KW-0547">Nucleotide-binding</keyword>
<keyword id="KW-1185">Reference proteome</keyword>
<keyword id="KW-1278">Translocase</keyword>
<keyword id="KW-0813">Transport</keyword>
<dbReference type="EC" id="7.1.2.2" evidence="1"/>
<dbReference type="EMBL" id="AF098522">
    <property type="protein sequence ID" value="AAF22498.1"/>
    <property type="molecule type" value="Genomic_DNA"/>
</dbReference>
<dbReference type="EMBL" id="CP000033">
    <property type="protein sequence ID" value="AAV42644.1"/>
    <property type="molecule type" value="Genomic_DNA"/>
</dbReference>
<dbReference type="RefSeq" id="WP_011254247.1">
    <property type="nucleotide sequence ID" value="NC_006814.3"/>
</dbReference>
<dbReference type="RefSeq" id="YP_193675.1">
    <property type="nucleotide sequence ID" value="NC_006814.3"/>
</dbReference>
<dbReference type="SMR" id="Q5FKY0"/>
<dbReference type="STRING" id="272621.LBA0778"/>
<dbReference type="KEGG" id="lac:LBA0778"/>
<dbReference type="PATRIC" id="fig|272621.13.peg.740"/>
<dbReference type="eggNOG" id="COG0055">
    <property type="taxonomic scope" value="Bacteria"/>
</dbReference>
<dbReference type="HOGENOM" id="CLU_022398_0_2_9"/>
<dbReference type="OrthoDB" id="9801639at2"/>
<dbReference type="BioCyc" id="LACI272621:G1G49-794-MONOMER"/>
<dbReference type="Proteomes" id="UP000006381">
    <property type="component" value="Chromosome"/>
</dbReference>
<dbReference type="GO" id="GO:0005886">
    <property type="term" value="C:plasma membrane"/>
    <property type="evidence" value="ECO:0007669"/>
    <property type="project" value="UniProtKB-SubCell"/>
</dbReference>
<dbReference type="GO" id="GO:0045259">
    <property type="term" value="C:proton-transporting ATP synthase complex"/>
    <property type="evidence" value="ECO:0007669"/>
    <property type="project" value="UniProtKB-KW"/>
</dbReference>
<dbReference type="GO" id="GO:0005524">
    <property type="term" value="F:ATP binding"/>
    <property type="evidence" value="ECO:0007669"/>
    <property type="project" value="UniProtKB-UniRule"/>
</dbReference>
<dbReference type="GO" id="GO:0016887">
    <property type="term" value="F:ATP hydrolysis activity"/>
    <property type="evidence" value="ECO:0007669"/>
    <property type="project" value="InterPro"/>
</dbReference>
<dbReference type="GO" id="GO:0046933">
    <property type="term" value="F:proton-transporting ATP synthase activity, rotational mechanism"/>
    <property type="evidence" value="ECO:0007669"/>
    <property type="project" value="UniProtKB-UniRule"/>
</dbReference>
<dbReference type="CDD" id="cd18110">
    <property type="entry name" value="ATP-synt_F1_beta_C"/>
    <property type="match status" value="1"/>
</dbReference>
<dbReference type="CDD" id="cd18115">
    <property type="entry name" value="ATP-synt_F1_beta_N"/>
    <property type="match status" value="1"/>
</dbReference>
<dbReference type="CDD" id="cd01133">
    <property type="entry name" value="F1-ATPase_beta_CD"/>
    <property type="match status" value="1"/>
</dbReference>
<dbReference type="FunFam" id="1.10.1140.10:FF:000001">
    <property type="entry name" value="ATP synthase subunit beta"/>
    <property type="match status" value="1"/>
</dbReference>
<dbReference type="FunFam" id="2.40.10.170:FF:000005">
    <property type="entry name" value="ATP synthase subunit beta"/>
    <property type="match status" value="1"/>
</dbReference>
<dbReference type="FunFam" id="3.40.50.300:FF:000004">
    <property type="entry name" value="ATP synthase subunit beta"/>
    <property type="match status" value="1"/>
</dbReference>
<dbReference type="Gene3D" id="2.40.10.170">
    <property type="match status" value="1"/>
</dbReference>
<dbReference type="Gene3D" id="1.10.1140.10">
    <property type="entry name" value="Bovine Mitochondrial F1-atpase, Atp Synthase Beta Chain, Chain D, domain 3"/>
    <property type="match status" value="1"/>
</dbReference>
<dbReference type="Gene3D" id="3.40.50.300">
    <property type="entry name" value="P-loop containing nucleotide triphosphate hydrolases"/>
    <property type="match status" value="1"/>
</dbReference>
<dbReference type="HAMAP" id="MF_01347">
    <property type="entry name" value="ATP_synth_beta_bact"/>
    <property type="match status" value="1"/>
</dbReference>
<dbReference type="InterPro" id="IPR003593">
    <property type="entry name" value="AAA+_ATPase"/>
</dbReference>
<dbReference type="InterPro" id="IPR055190">
    <property type="entry name" value="ATP-synt_VA_C"/>
</dbReference>
<dbReference type="InterPro" id="IPR005722">
    <property type="entry name" value="ATP_synth_F1_bsu"/>
</dbReference>
<dbReference type="InterPro" id="IPR020003">
    <property type="entry name" value="ATPase_a/bsu_AS"/>
</dbReference>
<dbReference type="InterPro" id="IPR050053">
    <property type="entry name" value="ATPase_alpha/beta_chains"/>
</dbReference>
<dbReference type="InterPro" id="IPR004100">
    <property type="entry name" value="ATPase_F1/V1/A1_a/bsu_N"/>
</dbReference>
<dbReference type="InterPro" id="IPR036121">
    <property type="entry name" value="ATPase_F1/V1/A1_a/bsu_N_sf"/>
</dbReference>
<dbReference type="InterPro" id="IPR000194">
    <property type="entry name" value="ATPase_F1/V1/A1_a/bsu_nucl-bd"/>
</dbReference>
<dbReference type="InterPro" id="IPR024034">
    <property type="entry name" value="ATPase_F1/V1_b/a_C"/>
</dbReference>
<dbReference type="InterPro" id="IPR027417">
    <property type="entry name" value="P-loop_NTPase"/>
</dbReference>
<dbReference type="NCBIfam" id="TIGR01039">
    <property type="entry name" value="atpD"/>
    <property type="match status" value="1"/>
</dbReference>
<dbReference type="PANTHER" id="PTHR15184">
    <property type="entry name" value="ATP SYNTHASE"/>
    <property type="match status" value="1"/>
</dbReference>
<dbReference type="PANTHER" id="PTHR15184:SF71">
    <property type="entry name" value="ATP SYNTHASE SUBUNIT BETA, MITOCHONDRIAL"/>
    <property type="match status" value="1"/>
</dbReference>
<dbReference type="Pfam" id="PF00006">
    <property type="entry name" value="ATP-synt_ab"/>
    <property type="match status" value="1"/>
</dbReference>
<dbReference type="Pfam" id="PF02874">
    <property type="entry name" value="ATP-synt_ab_N"/>
    <property type="match status" value="1"/>
</dbReference>
<dbReference type="Pfam" id="PF22919">
    <property type="entry name" value="ATP-synt_VA_C"/>
    <property type="match status" value="1"/>
</dbReference>
<dbReference type="SMART" id="SM00382">
    <property type="entry name" value="AAA"/>
    <property type="match status" value="1"/>
</dbReference>
<dbReference type="SUPFAM" id="SSF47917">
    <property type="entry name" value="C-terminal domain of alpha and beta subunits of F1 ATP synthase"/>
    <property type="match status" value="1"/>
</dbReference>
<dbReference type="SUPFAM" id="SSF50615">
    <property type="entry name" value="N-terminal domain of alpha and beta subunits of F1 ATP synthase"/>
    <property type="match status" value="1"/>
</dbReference>
<dbReference type="SUPFAM" id="SSF52540">
    <property type="entry name" value="P-loop containing nucleoside triphosphate hydrolases"/>
    <property type="match status" value="1"/>
</dbReference>
<dbReference type="PROSITE" id="PS00152">
    <property type="entry name" value="ATPASE_ALPHA_BETA"/>
    <property type="match status" value="1"/>
</dbReference>
<reference key="1">
    <citation type="journal article" date="1999" name="Mol. Microbiol.">
        <title>Identification of the pH-inducible, proton-translocating F1F0-ATPase (atpBEFHAGDC) operon of Lactobacillus acidophilus by differential display: gene structure, cloning and characterization.</title>
        <authorList>
            <person name="Kullen M.J."/>
            <person name="Klaenhammer T.R."/>
        </authorList>
    </citation>
    <scope>NUCLEOTIDE SEQUENCE [GENOMIC DNA]</scope>
    <scope>ACTIVITY REGULATION</scope>
    <scope>INDUCTION</scope>
    <scope>PROBABLE OPERON</scope>
    <source>
        <strain>ATCC 700396 / NCK56 / N2 / NCFM</strain>
    </source>
</reference>
<reference key="2">
    <citation type="journal article" date="2005" name="Proc. Natl. Acad. Sci. U.S.A.">
        <title>Complete genome sequence of the probiotic lactic acid bacterium Lactobacillus acidophilus NCFM.</title>
        <authorList>
            <person name="Altermann E."/>
            <person name="Russell W.M."/>
            <person name="Azcarate-Peril M.A."/>
            <person name="Barrangou R."/>
            <person name="Buck B.L."/>
            <person name="McAuliffe O."/>
            <person name="Souther N."/>
            <person name="Dobson A."/>
            <person name="Duong T."/>
            <person name="Callanan M."/>
            <person name="Lick S."/>
            <person name="Hamrick A."/>
            <person name="Cano R."/>
            <person name="Klaenhammer T.R."/>
        </authorList>
    </citation>
    <scope>NUCLEOTIDE SEQUENCE [LARGE SCALE GENOMIC DNA]</scope>
    <source>
        <strain>ATCC 700396 / NCK56 / N2 / NCFM</strain>
    </source>
</reference>
<protein>
    <recommendedName>
        <fullName evidence="1">ATP synthase subunit beta</fullName>
        <ecNumber evidence="1">7.1.2.2</ecNumber>
    </recommendedName>
    <alternativeName>
        <fullName evidence="1">ATP synthase F1 sector subunit beta</fullName>
    </alternativeName>
    <alternativeName>
        <fullName evidence="1">F-ATPase subunit beta</fullName>
    </alternativeName>
</protein>
<name>ATPB_LACAC</name>
<comment type="function">
    <text evidence="1">Produces ATP from ADP in the presence of a proton gradient across the membrane. The catalytic sites are hosted primarily by the beta subunits.</text>
</comment>
<comment type="catalytic activity">
    <reaction evidence="1">
        <text>ATP + H2O + 4 H(+)(in) = ADP + phosphate + 5 H(+)(out)</text>
        <dbReference type="Rhea" id="RHEA:57720"/>
        <dbReference type="ChEBI" id="CHEBI:15377"/>
        <dbReference type="ChEBI" id="CHEBI:15378"/>
        <dbReference type="ChEBI" id="CHEBI:30616"/>
        <dbReference type="ChEBI" id="CHEBI:43474"/>
        <dbReference type="ChEBI" id="CHEBI:456216"/>
        <dbReference type="EC" id="7.1.2.2"/>
    </reaction>
</comment>
<comment type="activity regulation">
    <text evidence="2">Increases 2-fold following exposure to low pH.</text>
</comment>
<comment type="subunit">
    <text evidence="1">F-type ATPases have 2 components, CF(1) - the catalytic core - and CF(0) - the membrane proton channel. CF(1) has five subunits: alpha(3), beta(3), gamma(1), delta(1), epsilon(1). CF(0) has three main subunits: a(1), b(2) and c(9-12). The alpha and beta chains form an alternating ring which encloses part of the gamma chain. CF(1) is attached to CF(0) by a central stalk formed by the gamma and epsilon chains, while a peripheral stalk is formed by the delta and b chains.</text>
</comment>
<comment type="subcellular location">
    <subcellularLocation>
        <location evidence="1">Cell membrane</location>
        <topology evidence="1">Peripheral membrane protein</topology>
    </subcellularLocation>
</comment>
<comment type="induction">
    <text evidence="2">By low pH.</text>
</comment>
<comment type="similarity">
    <text evidence="1">Belongs to the ATPase alpha/beta chains family.</text>
</comment>
<feature type="chain" id="PRO_0000254278" description="ATP synthase subunit beta">
    <location>
        <begin position="1"/>
        <end position="479"/>
    </location>
</feature>
<feature type="binding site" evidence="1">
    <location>
        <begin position="153"/>
        <end position="160"/>
    </location>
    <ligand>
        <name>ATP</name>
        <dbReference type="ChEBI" id="CHEBI:30616"/>
    </ligand>
</feature>
<feature type="sequence conflict" description="In Ref. 1; AAF22498." evidence="3" ref="1">
    <original>F</original>
    <variation>L</variation>
    <location>
        <position position="104"/>
    </location>
</feature>
<feature type="sequence conflict" description="In Ref. 1; AAF22498." evidence="3" ref="1">
    <original>D</original>
    <variation>N</variation>
    <location>
        <position position="122"/>
    </location>
</feature>
<feature type="sequence conflict" description="In Ref. 1; AAF22498." evidence="3" ref="1">
    <original>EI</original>
    <variation>KN</variation>
    <location>
        <begin position="128"/>
        <end position="129"/>
    </location>
</feature>
<feature type="sequence conflict" description="In Ref. 1; AAF22498." evidence="3" ref="1">
    <original>EL</original>
    <variation>KI</variation>
    <location>
        <begin position="165"/>
        <end position="166"/>
    </location>
</feature>
<feature type="sequence conflict" description="In Ref. 1; AAF22498." evidence="3" ref="1">
    <original>LATE</original>
    <variation>ITR</variation>
    <location>
        <begin position="276"/>
        <end position="279"/>
    </location>
</feature>
<feature type="sequence conflict" description="In Ref. 1; AAF22498." evidence="3" ref="1">
    <original>V</original>
    <variation>E</variation>
    <location>
        <position position="353"/>
    </location>
</feature>
<accession>Q5FKY0</accession>
<accession>Q9RGY1</accession>
<gene>
    <name evidence="1" type="primary">atpD</name>
    <name type="ordered locus">LBA0778</name>
</gene>
<sequence length="479" mass="52215">MSEGEIVQVIGPVVDVKFPIDKNLPDINNALRVIKSEDESIVLEVTLELGDGVLRTIAMESTDGLRRGMKVEDTGAPISVPVGEDTLGRVFNVLGQPIDGGPAFPKDHPREGIHKEAPKYEDLTTSREILETGIKVIDLLEPYVRGGKVGLFGGAGVGKTTIIQELIHNIAQEHGGISVFTGVGERTREGNDLYFEMKASGVLSKTAMVFGQMNEPPGARMRVALTGLTLAEYFRDVEGQDVLLFIDNIFRFTQAGSEVSALLGRMPSAVGYQPTLATEMGQLQERITSTKKGSITSIQAVYVPADDYTDPAPSTTFAYLDATTNLERSLVEQGIYPAVDPLESSSSALDPEVVGQEHYEVATRVQHVLQRYHELQDIISVLGMDELSDEEKLIVARARKVQFFLSQNFFVAEQFTGVPGSYVPIKETIKGFKLILDGHLDDLPEDAFRGVGPIEDVLKKAQEMGVTPSDPEAKALLEK</sequence>
<organism>
    <name type="scientific">Lactobacillus acidophilus (strain ATCC 700396 / NCK56 / N2 / NCFM)</name>
    <dbReference type="NCBI Taxonomy" id="272621"/>
    <lineage>
        <taxon>Bacteria</taxon>
        <taxon>Bacillati</taxon>
        <taxon>Bacillota</taxon>
        <taxon>Bacilli</taxon>
        <taxon>Lactobacillales</taxon>
        <taxon>Lactobacillaceae</taxon>
        <taxon>Lactobacillus</taxon>
    </lineage>
</organism>
<evidence type="ECO:0000255" key="1">
    <source>
        <dbReference type="HAMAP-Rule" id="MF_01347"/>
    </source>
</evidence>
<evidence type="ECO:0000269" key="2">
    <source>
    </source>
</evidence>
<evidence type="ECO:0000305" key="3"/>